<protein>
    <recommendedName>
        <fullName>LWamide neuropeptides</fullName>
    </recommendedName>
    <component>
        <recommendedName>
            <fullName>LWamide I</fullName>
        </recommendedName>
    </component>
    <component>
        <recommendedName>
            <fullName>LWamide II</fullName>
        </recommendedName>
    </component>
    <component>
        <recommendedName>
            <fullName>LWS</fullName>
        </recommendedName>
    </component>
</protein>
<accession>Q25060</accession>
<comment type="function">
    <text>LWamide peptides may be involved in induction of metamorphosis.</text>
</comment>
<comment type="subcellular location">
    <subcellularLocation>
        <location>Secreted</location>
    </subcellularLocation>
</comment>
<comment type="alternative products">
    <event type="alternative splicing"/>
    <isoform>
        <id>Q25060-1</id>
        <name>1</name>
        <sequence type="displayed"/>
    </isoform>
    <isoform>
        <id>Q25060-2</id>
        <name>2</name>
        <sequence type="described" ref="VSP_050202"/>
    </isoform>
</comment>
<comment type="tissue specificity">
    <text evidence="3">In planula larvae, expressed in a narrow ring of ectodermal neurosensory cells around the widest circumference at the anterior of the larvae. In primary polyps, expression is confined to endodermal cells of the hypostome. In mature polyps, expression is strong in the epidermis from the tentacle level to the base of the polyp and weak in the gastrodermal cells in the apical hypostome.</text>
</comment>
<comment type="developmental stage">
    <text evidence="3">Expressed at a low level in mature polyps and planula larvae, and at a high level in primary polyps.</text>
</comment>
<comment type="similarity">
    <text evidence="5">Belongs to the LWamide neuropeptide family.</text>
</comment>
<proteinExistence type="evidence at transcript level"/>
<sequence length="419" mass="47058">MEKEMRNLMLLVLLTVILDNGIGKCNAKSEEDQDGNARNNRIDKNDDNSDSIEKYLREVTDELSKILAKRIYRDIQLRENNKKAENRQSWIGDLENLDIDSTVQRPPGLWGREADFDNTRAHDSAQISDEKQSGLWVGDAKPPGLWGRDAKPPGLWGRDAKPPGLWGRDAKPPGLWGRDAKPPGLWGRDAKPPGLWGRDAKPPGLWGRDAKPPGLWGGDAKPPGLWGRDAKPPGLWGRDAKPPGLWGRDAKPPGLWGRDAKPPGLWGRDAKPPGLWGRDTKPPGLWGRDAKPPGLWGRDAKPPSLWSKDNNVIKSRSDDAKPPGLWGRQVEDGPTKIWGDGFLDAERHIRLLKNDERFNRLEKKADMEEELRVAQGPSVTNAKDTFGELADLLRKRIVKRLHKNDSLNNRRNNKKNNKF</sequence>
<evidence type="ECO:0000255" key="1"/>
<evidence type="ECO:0000256" key="2">
    <source>
        <dbReference type="SAM" id="MobiDB-lite"/>
    </source>
</evidence>
<evidence type="ECO:0000269" key="3">
    <source ref="1"/>
</evidence>
<evidence type="ECO:0000303" key="4">
    <source ref="1"/>
</evidence>
<evidence type="ECO:0000305" key="5"/>
<dbReference type="EMBL" id="X89734">
    <property type="protein sequence ID" value="CAA61886.1"/>
    <property type="molecule type" value="mRNA"/>
</dbReference>
<dbReference type="GO" id="GO:0005576">
    <property type="term" value="C:extracellular region"/>
    <property type="evidence" value="ECO:0007669"/>
    <property type="project" value="UniProtKB-SubCell"/>
</dbReference>
<dbReference type="GO" id="GO:0007218">
    <property type="term" value="P:neuropeptide signaling pathway"/>
    <property type="evidence" value="ECO:0007669"/>
    <property type="project" value="UniProtKB-KW"/>
</dbReference>
<keyword id="KW-0025">Alternative splicing</keyword>
<keyword id="KW-0027">Amidation</keyword>
<keyword id="KW-0165">Cleavage on pair of basic residues</keyword>
<keyword id="KW-0527">Neuropeptide</keyword>
<keyword id="KW-0677">Repeat</keyword>
<keyword id="KW-0964">Secreted</keyword>
<keyword id="KW-0732">Signal</keyword>
<organism>
    <name type="scientific">Hydractinia echinata</name>
    <name type="common">Snail fur</name>
    <name type="synonym">Hermit crab hydroid</name>
    <dbReference type="NCBI Taxonomy" id="3283270"/>
    <lineage>
        <taxon>Eukaryota</taxon>
        <taxon>Metazoa</taxon>
        <taxon>Cnidaria</taxon>
        <taxon>Anthozoa</taxon>
        <taxon>Octocorallia</taxon>
        <taxon>Malacalcyonacea</taxon>
        <taxon>Cladiellidae</taxon>
        <taxon>Klyxum</taxon>
    </lineage>
</organism>
<feature type="signal peptide" evidence="1">
    <location>
        <begin position="1"/>
        <end position="27"/>
    </location>
</feature>
<feature type="propeptide" id="PRO_0000010045" evidence="1">
    <location>
        <begin position="28"/>
        <end position="104"/>
    </location>
</feature>
<feature type="peptide" id="PRO_0000010046" description="LWamide I" evidence="1">
    <location>
        <begin position="105"/>
        <end position="110"/>
    </location>
</feature>
<feature type="propeptide" id="PRO_0000010047" evidence="1">
    <location>
        <begin position="113"/>
        <end position="140"/>
    </location>
</feature>
<feature type="peptide" id="PRO_0000010048" description="LWamide II" evidence="1">
    <location>
        <begin position="141"/>
        <end position="146"/>
    </location>
</feature>
<feature type="propeptide" id="PRO_0000010049" evidence="1">
    <location>
        <begin position="149"/>
        <end position="150"/>
    </location>
</feature>
<feature type="peptide" id="PRO_0000010050" description="LWamide II" evidence="1">
    <location>
        <begin position="151"/>
        <end position="156"/>
    </location>
</feature>
<feature type="propeptide" id="PRO_0000010051" evidence="1">
    <location>
        <begin position="159"/>
        <end position="160"/>
    </location>
</feature>
<feature type="peptide" id="PRO_0000010052" description="LWamide II" evidence="1">
    <location>
        <begin position="161"/>
        <end position="166"/>
    </location>
</feature>
<feature type="propeptide" id="PRO_0000010053" evidence="1">
    <location>
        <begin position="169"/>
        <end position="170"/>
    </location>
</feature>
<feature type="peptide" id="PRO_0000010054" description="LWamide II" evidence="1">
    <location>
        <begin position="171"/>
        <end position="176"/>
    </location>
</feature>
<feature type="propeptide" id="PRO_0000010055" evidence="1">
    <location>
        <begin position="179"/>
        <end position="180"/>
    </location>
</feature>
<feature type="peptide" id="PRO_0000010056" description="LWamide II" evidence="1">
    <location>
        <begin position="181"/>
        <end position="186"/>
    </location>
</feature>
<feature type="propeptide" id="PRO_0000010057" evidence="1">
    <location>
        <begin position="189"/>
        <end position="190"/>
    </location>
</feature>
<feature type="peptide" id="PRO_0000010058" description="LWamide II" evidence="1">
    <location>
        <begin position="191"/>
        <end position="196"/>
    </location>
</feature>
<feature type="propeptide" id="PRO_0000010059" evidence="1">
    <location>
        <begin position="199"/>
        <end position="200"/>
    </location>
</feature>
<feature type="peptide" id="PRO_0000010060" description="LWamide II" evidence="1">
    <location>
        <begin position="201"/>
        <end position="206"/>
    </location>
</feature>
<feature type="propeptide" id="PRO_0000010061" evidence="1">
    <location>
        <begin position="209"/>
        <end position="210"/>
    </location>
</feature>
<feature type="peptide" id="PRO_0000010062" description="LWamide II" evidence="1">
    <location>
        <begin position="211"/>
        <end position="216"/>
    </location>
</feature>
<feature type="propeptide" id="PRO_0000010063" description="Seems to have a sequencing error or a mutation in position 218; Gly instead of Arg">
    <location>
        <begin position="218"/>
        <end position="220"/>
    </location>
</feature>
<feature type="peptide" id="PRO_0000010064" description="LWamide II" evidence="1">
    <location>
        <begin position="221"/>
        <end position="226"/>
    </location>
</feature>
<feature type="propeptide" id="PRO_0000010065" evidence="1">
    <location>
        <begin position="229"/>
        <end position="230"/>
    </location>
</feature>
<feature type="peptide" id="PRO_0000010066" description="LWamide II" evidence="1">
    <location>
        <begin position="231"/>
        <end position="236"/>
    </location>
</feature>
<feature type="propeptide" id="PRO_0000010067" evidence="1">
    <location>
        <begin position="239"/>
        <end position="240"/>
    </location>
</feature>
<feature type="peptide" id="PRO_0000010068" description="LWamide II" evidence="1">
    <location>
        <begin position="241"/>
        <end position="246"/>
    </location>
</feature>
<feature type="propeptide" id="PRO_0000010069" evidence="1">
    <location>
        <begin position="249"/>
        <end position="250"/>
    </location>
</feature>
<feature type="peptide" id="PRO_0000010070" description="LWamide II" evidence="1">
    <location>
        <begin position="251"/>
        <end position="256"/>
    </location>
</feature>
<feature type="propeptide" id="PRO_0000010071" evidence="1">
    <location>
        <begin position="259"/>
        <end position="260"/>
    </location>
</feature>
<feature type="peptide" id="PRO_0000010072" description="LWamide II" evidence="1">
    <location>
        <begin position="261"/>
        <end position="266"/>
    </location>
</feature>
<feature type="propeptide" id="PRO_0000010073" evidence="1">
    <location>
        <begin position="269"/>
        <end position="270"/>
    </location>
</feature>
<feature type="peptide" id="PRO_0000010074" description="LWamide II" evidence="1">
    <location>
        <begin position="271"/>
        <end position="276"/>
    </location>
</feature>
<feature type="propeptide" id="PRO_0000010075" evidence="1">
    <location>
        <begin position="279"/>
        <end position="280"/>
    </location>
</feature>
<feature type="peptide" id="PRO_0000010076" description="LWamide II" evidence="1">
    <location>
        <begin position="281"/>
        <end position="286"/>
    </location>
</feature>
<feature type="propeptide" id="PRO_0000010077" evidence="1">
    <location>
        <begin position="289"/>
        <end position="290"/>
    </location>
</feature>
<feature type="peptide" id="PRO_0000010078" description="LWamide II" evidence="1">
    <location>
        <begin position="291"/>
        <end position="296"/>
    </location>
</feature>
<feature type="propeptide" id="PRO_0000010079" evidence="1">
    <location>
        <begin position="299"/>
        <end position="300"/>
    </location>
</feature>
<feature type="peptide" id="PRO_0000010080" description="LWS" evidence="1">
    <location>
        <begin position="301"/>
        <end position="307"/>
    </location>
</feature>
<feature type="propeptide" id="PRO_0000010081" evidence="1">
    <location>
        <begin position="309"/>
        <end position="320"/>
    </location>
</feature>
<feature type="peptide" id="PRO_0000010082" description="LWamide II" evidence="1">
    <location>
        <begin position="321"/>
        <end position="326"/>
    </location>
</feature>
<feature type="propeptide" id="PRO_0000010083" evidence="1">
    <location>
        <begin position="329"/>
        <end position="419"/>
    </location>
</feature>
<feature type="region of interest" description="Disordered" evidence="2">
    <location>
        <begin position="27"/>
        <end position="48"/>
    </location>
</feature>
<feature type="region of interest" description="Disordered" evidence="2">
    <location>
        <begin position="120"/>
        <end position="332"/>
    </location>
</feature>
<feature type="compositionally biased region" description="Basic and acidic residues" evidence="2">
    <location>
        <begin position="120"/>
        <end position="132"/>
    </location>
</feature>
<feature type="modified residue" description="Tryptophan amide" evidence="1">
    <location>
        <position position="110"/>
    </location>
</feature>
<feature type="modified residue" description="Tryptophan amide" evidence="1">
    <location>
        <position position="146"/>
    </location>
</feature>
<feature type="modified residue" description="Tryptophan amide" evidence="1">
    <location>
        <position position="156"/>
    </location>
</feature>
<feature type="modified residue" description="Tryptophan amide" evidence="1">
    <location>
        <position position="166"/>
    </location>
</feature>
<feature type="modified residue" description="Tryptophan amide" evidence="1">
    <location>
        <position position="176"/>
    </location>
</feature>
<feature type="modified residue" description="Tryptophan amide" evidence="1">
    <location>
        <position position="186"/>
    </location>
</feature>
<feature type="modified residue" description="Tryptophan amide" evidence="1">
    <location>
        <position position="196"/>
    </location>
</feature>
<feature type="modified residue" description="Tryptophan amide" evidence="1">
    <location>
        <position position="206"/>
    </location>
</feature>
<feature type="modified residue" description="Tryptophan amide" evidence="1">
    <location>
        <position position="216"/>
    </location>
</feature>
<feature type="modified residue" description="Tryptophan amide" evidence="1">
    <location>
        <position position="226"/>
    </location>
</feature>
<feature type="modified residue" description="Tryptophan amide" evidence="1">
    <location>
        <position position="236"/>
    </location>
</feature>
<feature type="modified residue" description="Tryptophan amide" evidence="1">
    <location>
        <position position="246"/>
    </location>
</feature>
<feature type="modified residue" description="Tryptophan amide" evidence="1">
    <location>
        <position position="256"/>
    </location>
</feature>
<feature type="modified residue" description="Tryptophan amide" evidence="1">
    <location>
        <position position="266"/>
    </location>
</feature>
<feature type="modified residue" description="Tryptophan amide" evidence="1">
    <location>
        <position position="276"/>
    </location>
</feature>
<feature type="modified residue" description="Tryptophan amide" evidence="1">
    <location>
        <position position="286"/>
    </location>
</feature>
<feature type="modified residue" description="Tryptophan amide" evidence="1">
    <location>
        <position position="296"/>
    </location>
</feature>
<feature type="modified residue" description="Tryptophan amide" evidence="1">
    <location>
        <position position="326"/>
    </location>
</feature>
<feature type="splice variant" id="VSP_050202" description="In isoform 2." evidence="4">
    <location>
        <begin position="185"/>
        <end position="214"/>
    </location>
</feature>
<feature type="sequence variant" description="In clone M6.">
    <original>I</original>
    <variation>T</variation>
    <location>
        <position position="66"/>
    </location>
</feature>
<feature type="sequence variant" description="In clone M6.">
    <original>K</original>
    <variation>N</variation>
    <location>
        <position position="414"/>
    </location>
</feature>
<reference evidence="5" key="1">
    <citation type="journal article" date="1996" name="Roux's Arch. Dev. Biol.">
        <title>LWamides from Cnidaria constitute a novel family of neuropeptides with morphogenetic activity.</title>
        <authorList>
            <person name="Gajewski M."/>
            <person name="Leitz T."/>
            <person name="Schlossherr J."/>
            <person name="Plickert G."/>
        </authorList>
    </citation>
    <scope>NUCLEOTIDE SEQUENCE [MRNA] (ISOFORMS 1 AND 2)</scope>
    <scope>TISSUE SPECIFICITY</scope>
    <scope>DEVELOPMENTAL STAGE</scope>
</reference>
<name>LWA_HYDEC</name>